<gene>
    <name evidence="3" type="primary">SCN1B</name>
</gene>
<dbReference type="EMBL" id="U35382">
    <property type="protein sequence ID" value="AAB17572.1"/>
    <property type="molecule type" value="mRNA"/>
</dbReference>
<dbReference type="PIR" id="JC4788">
    <property type="entry name" value="JC4788"/>
</dbReference>
<dbReference type="RefSeq" id="NP_001075828.1">
    <property type="nucleotide sequence ID" value="NM_001082359.1"/>
</dbReference>
<dbReference type="SMR" id="P53788"/>
<dbReference type="FunCoup" id="P53788">
    <property type="interactions" value="143"/>
</dbReference>
<dbReference type="STRING" id="9986.ENSOCUP00000013138"/>
<dbReference type="GlyCosmos" id="P53788">
    <property type="glycosylation" value="4 sites, No reported glycans"/>
</dbReference>
<dbReference type="PaxDb" id="9986-ENSOCUP00000013138"/>
<dbReference type="GeneID" id="100009211"/>
<dbReference type="KEGG" id="ocu:100009211"/>
<dbReference type="CTD" id="6324"/>
<dbReference type="eggNOG" id="ENOG502R0UM">
    <property type="taxonomic scope" value="Eukaryota"/>
</dbReference>
<dbReference type="InParanoid" id="P53788"/>
<dbReference type="OrthoDB" id="8868224at2759"/>
<dbReference type="Proteomes" id="UP000001811">
    <property type="component" value="Unplaced"/>
</dbReference>
<dbReference type="GO" id="GO:0030424">
    <property type="term" value="C:axon"/>
    <property type="evidence" value="ECO:0007669"/>
    <property type="project" value="UniProtKB-SubCell"/>
</dbReference>
<dbReference type="GO" id="GO:0043204">
    <property type="term" value="C:perikaryon"/>
    <property type="evidence" value="ECO:0007669"/>
    <property type="project" value="UniProtKB-SubCell"/>
</dbReference>
<dbReference type="GO" id="GO:0005886">
    <property type="term" value="C:plasma membrane"/>
    <property type="evidence" value="ECO:0000250"/>
    <property type="project" value="UniProtKB"/>
</dbReference>
<dbReference type="GO" id="GO:0001518">
    <property type="term" value="C:voltage-gated sodium channel complex"/>
    <property type="evidence" value="ECO:0000250"/>
    <property type="project" value="UniProtKB"/>
</dbReference>
<dbReference type="GO" id="GO:0019871">
    <property type="term" value="F:sodium channel inhibitor activity"/>
    <property type="evidence" value="ECO:0007669"/>
    <property type="project" value="TreeGrafter"/>
</dbReference>
<dbReference type="GO" id="GO:0017080">
    <property type="term" value="F:sodium channel regulator activity"/>
    <property type="evidence" value="ECO:0000250"/>
    <property type="project" value="UniProtKB"/>
</dbReference>
<dbReference type="GO" id="GO:0044325">
    <property type="term" value="F:transmembrane transporter binding"/>
    <property type="evidence" value="ECO:0007669"/>
    <property type="project" value="TreeGrafter"/>
</dbReference>
<dbReference type="GO" id="GO:0086002">
    <property type="term" value="P:cardiac muscle cell action potential involved in contraction"/>
    <property type="evidence" value="ECO:0007669"/>
    <property type="project" value="TreeGrafter"/>
</dbReference>
<dbReference type="GO" id="GO:1905152">
    <property type="term" value="P:positive regulation of voltage-gated sodium channel activity"/>
    <property type="evidence" value="ECO:0000250"/>
    <property type="project" value="UniProtKB"/>
</dbReference>
<dbReference type="GO" id="GO:0086091">
    <property type="term" value="P:regulation of heart rate by cardiac conduction"/>
    <property type="evidence" value="ECO:0007669"/>
    <property type="project" value="TreeGrafter"/>
</dbReference>
<dbReference type="GO" id="GO:0006814">
    <property type="term" value="P:sodium ion transport"/>
    <property type="evidence" value="ECO:0007669"/>
    <property type="project" value="UniProtKB-KW"/>
</dbReference>
<dbReference type="FunFam" id="2.60.40.10:FF:000581">
    <property type="entry name" value="sodium channel subunit beta-1"/>
    <property type="match status" value="1"/>
</dbReference>
<dbReference type="Gene3D" id="2.60.40.10">
    <property type="entry name" value="Immunoglobulins"/>
    <property type="match status" value="1"/>
</dbReference>
<dbReference type="InterPro" id="IPR036179">
    <property type="entry name" value="Ig-like_dom_sf"/>
</dbReference>
<dbReference type="InterPro" id="IPR013783">
    <property type="entry name" value="Ig-like_fold"/>
</dbReference>
<dbReference type="InterPro" id="IPR013106">
    <property type="entry name" value="Ig_V-set"/>
</dbReference>
<dbReference type="InterPro" id="IPR027098">
    <property type="entry name" value="Na_channel_b1/b3"/>
</dbReference>
<dbReference type="PANTHER" id="PTHR10546:SF2">
    <property type="entry name" value="SODIUM CHANNEL SUBUNIT BETA-1"/>
    <property type="match status" value="1"/>
</dbReference>
<dbReference type="PANTHER" id="PTHR10546">
    <property type="entry name" value="SODIUM CHANNEL SUBUNIT BETA-1 AND 3"/>
    <property type="match status" value="1"/>
</dbReference>
<dbReference type="Pfam" id="PF07686">
    <property type="entry name" value="V-set"/>
    <property type="match status" value="1"/>
</dbReference>
<dbReference type="SUPFAM" id="SSF48726">
    <property type="entry name" value="Immunoglobulin"/>
    <property type="match status" value="1"/>
</dbReference>
<organism>
    <name type="scientific">Oryctolagus cuniculus</name>
    <name type="common">Rabbit</name>
    <dbReference type="NCBI Taxonomy" id="9986"/>
    <lineage>
        <taxon>Eukaryota</taxon>
        <taxon>Metazoa</taxon>
        <taxon>Chordata</taxon>
        <taxon>Craniata</taxon>
        <taxon>Vertebrata</taxon>
        <taxon>Euteleostomi</taxon>
        <taxon>Mammalia</taxon>
        <taxon>Eutheria</taxon>
        <taxon>Euarchontoglires</taxon>
        <taxon>Glires</taxon>
        <taxon>Lagomorpha</taxon>
        <taxon>Leporidae</taxon>
        <taxon>Oryctolagus</taxon>
    </lineage>
</organism>
<reference key="1">
    <citation type="journal article" date="1996" name="Gene">
        <title>Cloning of the cDNA encoding the sodium channel beta 1 subunit from rabbit.</title>
        <authorList>
            <person name="Belcher S.M."/>
            <person name="Howe J.R."/>
        </authorList>
    </citation>
    <scope>NUCLEOTIDE SEQUENCE [MRNA]</scope>
    <source>
        <strain>New Zealand white</strain>
        <tissue>Sciatic nerve</tissue>
    </source>
</reference>
<comment type="function">
    <text evidence="3">Regulatory subunit of multiple voltage-gated sodium (Nav) channels directly mediating the depolarization of excitable membranes. Navs, also called VGSCs (voltage-gated sodium channels) or VDSCs (voltage-dependent sodium channels), operate by switching between closed and open conformations depending on the voltage difference across the membrane. In the open conformation they allow Na(+) ions to selectively pass through the pore, along their electrochemical gradient. The influx of Na+ ions provokes membrane depolarization, initiating the propagation of electrical signals throughout cells and tissues. The accessory beta subunits participate in localization and functional modulation of the Nav channels. Modulates the activity of SCN1A/Nav1.1, SCN2A/Nav1.2, SCN3A/Nav1.3, SCN4A/Nav1.4, SCN5A/Nav1.5, SCN8A/Nav1.6, SCN9A/Nav1.7 and SCN10A/Nav1.8.</text>
</comment>
<comment type="subunit">
    <text evidence="1 2 3">A voltage-gated sodium (Nav) channel consists of an ion-conducting pore-forming alpha subunit functional on its own that is regulated by one or more beta subunits. Interacts with SCN1A; regulatory subunit of SCN1A/Nav1.1. Interacts with SCN3A; regulatory subunit of SCN3A/Nav1.3. Interacts with SCN4A; regulatory subunit of SCN4A/Nav1.4. Interacts with SCN5A; regulatory subunit of SCN5A/Nav1.5. Interacts with SCN8A; regulatory subunit of SCN8A/Nav1.6 (By similarity). Interacts with SCN9A; regulatory subunit of SCN9A/Nav1.7 (By similarity). Interacts with SCN10A; regulatory subunit of SCN10A/Nav1.8 (By similarity). Interacts with NFASC (By similarity). Interacts with TMEM65 (By similarity).</text>
</comment>
<comment type="subcellular location">
    <subcellularLocation>
        <location evidence="1">Cell membrane</location>
        <topology evidence="3">Single-pass type I membrane protein</topology>
    </subcellularLocation>
    <subcellularLocation>
        <location evidence="1">Perikaryon</location>
    </subcellularLocation>
    <subcellularLocation>
        <location evidence="1">Cell projection</location>
    </subcellularLocation>
    <subcellularLocation>
        <location evidence="2">Cell projection</location>
        <location evidence="2">Axon</location>
    </subcellularLocation>
    <text evidence="1">Detected at nodes of Ranvier on the sciatic nerve.</text>
</comment>
<comment type="similarity">
    <text evidence="5">Belongs to the sodium channel auxiliary subunit SCN1B (TC 8.A.17) family.</text>
</comment>
<proteinExistence type="evidence at transcript level"/>
<name>SCN1B_RABIT</name>
<accession>P53788</accession>
<keyword id="KW-1003">Cell membrane</keyword>
<keyword id="KW-0966">Cell projection</keyword>
<keyword id="KW-1015">Disulfide bond</keyword>
<keyword id="KW-0325">Glycoprotein</keyword>
<keyword id="KW-0393">Immunoglobulin domain</keyword>
<keyword id="KW-0406">Ion transport</keyword>
<keyword id="KW-0472">Membrane</keyword>
<keyword id="KW-1185">Reference proteome</keyword>
<keyword id="KW-0732">Signal</keyword>
<keyword id="KW-0915">Sodium</keyword>
<keyword id="KW-0739">Sodium transport</keyword>
<keyword id="KW-0812">Transmembrane</keyword>
<keyword id="KW-1133">Transmembrane helix</keyword>
<keyword id="KW-0813">Transport</keyword>
<evidence type="ECO:0000250" key="1">
    <source>
        <dbReference type="UniProtKB" id="P97952"/>
    </source>
</evidence>
<evidence type="ECO:0000250" key="2">
    <source>
        <dbReference type="UniProtKB" id="Q00954"/>
    </source>
</evidence>
<evidence type="ECO:0000250" key="3">
    <source>
        <dbReference type="UniProtKB" id="Q07699"/>
    </source>
</evidence>
<evidence type="ECO:0000255" key="4"/>
<evidence type="ECO:0000305" key="5"/>
<feature type="signal peptide" evidence="2">
    <location>
        <begin position="1"/>
        <end position="18"/>
    </location>
</feature>
<feature type="chain" id="PRO_0000014928" description="Sodium channel regulatory subunit beta-1">
    <location>
        <begin position="19"/>
        <end position="218"/>
    </location>
</feature>
<feature type="topological domain" description="Extracellular" evidence="5">
    <location>
        <begin position="19"/>
        <end position="157"/>
    </location>
</feature>
<feature type="transmembrane region" description="Helical" evidence="3">
    <location>
        <begin position="158"/>
        <end position="179"/>
    </location>
</feature>
<feature type="topological domain" description="Cytoplasmic" evidence="5">
    <location>
        <begin position="180"/>
        <end position="218"/>
    </location>
</feature>
<feature type="domain" description="Ig-like C2-type">
    <location>
        <begin position="22"/>
        <end position="150"/>
    </location>
</feature>
<feature type="glycosylation site" description="N-linked (GlcNAc...) asparagine" evidence="4">
    <location>
        <position position="93"/>
    </location>
</feature>
<feature type="glycosylation site" description="N-linked (GlcNAc...) asparagine" evidence="4">
    <location>
        <position position="110"/>
    </location>
</feature>
<feature type="glycosylation site" description="N-linked (GlcNAc...) asparagine" evidence="4">
    <location>
        <position position="114"/>
    </location>
</feature>
<feature type="glycosylation site" description="N-linked (GlcNAc...) asparagine" evidence="4">
    <location>
        <position position="135"/>
    </location>
</feature>
<feature type="disulfide bond" evidence="3">
    <location>
        <begin position="21"/>
        <end position="43"/>
    </location>
</feature>
<feature type="disulfide bond" evidence="3">
    <location>
        <begin position="40"/>
        <end position="121"/>
    </location>
</feature>
<sequence length="218" mass="24706">MGRLLAFVVGAALVSSAWGGCVEVDSETEAVYGMTFKILCISCKRRSETTAETFTEWTFRQKGTEEFVKILRYENEVLQLEEDERFEGRVVWNGSRGTKDLQDLSIFITNVTYNHSGDYQCHVYRLLSFENYEHNTSVVKKIHLEVVDKANRDMASIVSEIMMYVLIVVLTIWLVAEMVYCYKKIAAATEAAAQENASEYLAITSESKENCTGVQVAE</sequence>
<protein>
    <recommendedName>
        <fullName evidence="3">Sodium channel regulatory subunit beta-1</fullName>
    </recommendedName>
</protein>